<accession>O68142</accession>
<accession>D5AUR6</accession>
<gene>
    <name type="primary">gluQ</name>
    <name type="ordered locus">RCAP_rcc01961</name>
</gene>
<protein>
    <recommendedName>
        <fullName>Glutamyl-Q tRNA(Asp) synthetase</fullName>
        <shortName>Glu-Q-RSs</shortName>
        <ecNumber>6.1.1.-</ecNumber>
    </recommendedName>
</protein>
<reference key="1">
    <citation type="journal article" date="2010" name="J. Bacteriol.">
        <title>Complete genome sequence of the photosynthetic purple nonsulfur bacterium Rhodobacter capsulatus SB 1003.</title>
        <authorList>
            <person name="Strnad H."/>
            <person name="Lapidus A."/>
            <person name="Paces J."/>
            <person name="Ulbrich P."/>
            <person name="Vlcek C."/>
            <person name="Paces V."/>
            <person name="Haselkorn R."/>
        </authorList>
    </citation>
    <scope>NUCLEOTIDE SEQUENCE [LARGE SCALE GENOMIC DNA]</scope>
    <source>
        <strain>ATCC BAA-309 / NBRC 16581 / SB1003</strain>
    </source>
</reference>
<reference key="2">
    <citation type="journal article" date="1997" name="Proc. Natl. Acad. Sci. U.S.A.">
        <title>Sequence of a 189-kb segment of the chromosome of Rhodobacter capsulatus SB1003.</title>
        <authorList>
            <person name="Vlcek C."/>
            <person name="Paces V."/>
            <person name="Maltsev N."/>
            <person name="Paces J."/>
            <person name="Haselkorn R."/>
            <person name="Fonstein M."/>
        </authorList>
    </citation>
    <scope>NUCLEOTIDE SEQUENCE [GENOMIC DNA] OF 1-58</scope>
    <source>
        <strain>ATCC BAA-309 / NBRC 16581 / SB1003</strain>
    </source>
</reference>
<organism>
    <name type="scientific">Rhodobacter capsulatus (strain ATCC BAA-309 / NBRC 16581 / SB1003)</name>
    <dbReference type="NCBI Taxonomy" id="272942"/>
    <lineage>
        <taxon>Bacteria</taxon>
        <taxon>Pseudomonadati</taxon>
        <taxon>Pseudomonadota</taxon>
        <taxon>Alphaproteobacteria</taxon>
        <taxon>Rhodobacterales</taxon>
        <taxon>Rhodobacter group</taxon>
        <taxon>Rhodobacter</taxon>
    </lineage>
</organism>
<proteinExistence type="inferred from homology"/>
<name>GLUQ_RHOCB</name>
<comment type="function">
    <text evidence="1">Catalyzes the tRNA-independent activation of glutamate in presence of ATP and the subsequent transfer of glutamate onto a tRNA(Asp). Glutamate is transferred on the 2-amino-5-(4,5-dihydroxy-2-cyclopenten-1-yl) moiety of the queuosine in the wobble position of the QUC anticodon (By similarity).</text>
</comment>
<comment type="cofactor">
    <cofactor evidence="1">
        <name>Zn(2+)</name>
        <dbReference type="ChEBI" id="CHEBI:29105"/>
    </cofactor>
    <text evidence="1">Binds 1 zinc ion per subunit.</text>
</comment>
<comment type="similarity">
    <text evidence="2">Belongs to the class-I aminoacyl-tRNA synthetase family. GluQ subfamily.</text>
</comment>
<comment type="sequence caution" evidence="2">
    <conflict type="erroneous initiation">
        <sequence resource="EMBL-CDS" id="AAC16232"/>
    </conflict>
    <text>Extended N-terminus.</text>
</comment>
<sequence>MITRFAPSPTGPLHLGHAFAAILAHDMARAAGGRFLLRIEDIDRARAKPQWEAQLLDDLRWLGITWDGPVLRQSDRLPLYRDALERLWQRGLVYSCTCSRRDIEQAASAPQEGAPLGPDGIVYPGSCRDKGRPRPGQALPETALRLRMDLAATETGFEETGPAHRGWHEIRPETMIRAVGDVVLARREMGTSYHLSVVLDDAAQGVTHVTRGEDLFEATCIHVTLQRLLGLPVPVYHHHGLIRDDAGKRLAKRDNARALSKYRAEGASPADIRRLIGL</sequence>
<keyword id="KW-0030">Aminoacyl-tRNA synthetase</keyword>
<keyword id="KW-0067">ATP-binding</keyword>
<keyword id="KW-0436">Ligase</keyword>
<keyword id="KW-0479">Metal-binding</keyword>
<keyword id="KW-0547">Nucleotide-binding</keyword>
<keyword id="KW-1185">Reference proteome</keyword>
<keyword id="KW-0862">Zinc</keyword>
<feature type="chain" id="PRO_0000119635" description="Glutamyl-Q tRNA(Asp) synthetase">
    <location>
        <begin position="1"/>
        <end position="278"/>
    </location>
</feature>
<feature type="short sequence motif" description="'HIGH' region">
    <location>
        <begin position="7"/>
        <end position="17"/>
    </location>
</feature>
<feature type="short sequence motif" description="'KMSKS' region">
    <location>
        <begin position="249"/>
        <end position="253"/>
    </location>
</feature>
<feature type="binding site" evidence="1">
    <location>
        <begin position="4"/>
        <end position="8"/>
    </location>
    <ligand>
        <name>L-glutamate</name>
        <dbReference type="ChEBI" id="CHEBI:29985"/>
    </ligand>
</feature>
<feature type="binding site" evidence="1">
    <location>
        <position position="40"/>
    </location>
    <ligand>
        <name>L-glutamate</name>
        <dbReference type="ChEBI" id="CHEBI:29985"/>
    </ligand>
</feature>
<feature type="binding site" evidence="1">
    <location>
        <position position="96"/>
    </location>
    <ligand>
        <name>Zn(2+)</name>
        <dbReference type="ChEBI" id="CHEBI:29105"/>
    </ligand>
</feature>
<feature type="binding site" evidence="1">
    <location>
        <position position="98"/>
    </location>
    <ligand>
        <name>Zn(2+)</name>
        <dbReference type="ChEBI" id="CHEBI:29105"/>
    </ligand>
</feature>
<feature type="binding site" evidence="1">
    <location>
        <position position="123"/>
    </location>
    <ligand>
        <name>Zn(2+)</name>
        <dbReference type="ChEBI" id="CHEBI:29105"/>
    </ligand>
</feature>
<feature type="binding site" evidence="1">
    <location>
        <position position="127"/>
    </location>
    <ligand>
        <name>Zn(2+)</name>
        <dbReference type="ChEBI" id="CHEBI:29105"/>
    </ligand>
</feature>
<feature type="binding site" evidence="1">
    <location>
        <position position="193"/>
    </location>
    <ligand>
        <name>L-glutamate</name>
        <dbReference type="ChEBI" id="CHEBI:29985"/>
    </ligand>
</feature>
<feature type="binding site" evidence="1">
    <location>
        <position position="211"/>
    </location>
    <ligand>
        <name>L-glutamate</name>
        <dbReference type="ChEBI" id="CHEBI:29985"/>
    </ligand>
</feature>
<feature type="binding site" evidence="1">
    <location>
        <position position="252"/>
    </location>
    <ligand>
        <name>ATP</name>
        <dbReference type="ChEBI" id="CHEBI:30616"/>
    </ligand>
</feature>
<evidence type="ECO:0000250" key="1"/>
<evidence type="ECO:0000305" key="2"/>
<dbReference type="EC" id="6.1.1.-"/>
<dbReference type="EMBL" id="CP001312">
    <property type="protein sequence ID" value="ADE85705.1"/>
    <property type="molecule type" value="Genomic_DNA"/>
</dbReference>
<dbReference type="EMBL" id="AF010496">
    <property type="protein sequence ID" value="AAC16232.1"/>
    <property type="status" value="ALT_INIT"/>
    <property type="molecule type" value="Genomic_DNA"/>
</dbReference>
<dbReference type="PIR" id="T03579">
    <property type="entry name" value="T03579"/>
</dbReference>
<dbReference type="SMR" id="O68142"/>
<dbReference type="STRING" id="272942.RCAP_rcc01961"/>
<dbReference type="GeneID" id="31490829"/>
<dbReference type="KEGG" id="rcp:RCAP_rcc01961"/>
<dbReference type="eggNOG" id="COG0008">
    <property type="taxonomic scope" value="Bacteria"/>
</dbReference>
<dbReference type="HOGENOM" id="CLU_015768_0_3_5"/>
<dbReference type="OrthoDB" id="9807503at2"/>
<dbReference type="Proteomes" id="UP000002361">
    <property type="component" value="Chromosome"/>
</dbReference>
<dbReference type="GO" id="GO:0005829">
    <property type="term" value="C:cytosol"/>
    <property type="evidence" value="ECO:0007669"/>
    <property type="project" value="TreeGrafter"/>
</dbReference>
<dbReference type="GO" id="GO:0005524">
    <property type="term" value="F:ATP binding"/>
    <property type="evidence" value="ECO:0007669"/>
    <property type="project" value="UniProtKB-KW"/>
</dbReference>
<dbReference type="GO" id="GO:0004818">
    <property type="term" value="F:glutamate-tRNA ligase activity"/>
    <property type="evidence" value="ECO:0007669"/>
    <property type="project" value="TreeGrafter"/>
</dbReference>
<dbReference type="GO" id="GO:0046872">
    <property type="term" value="F:metal ion binding"/>
    <property type="evidence" value="ECO:0007669"/>
    <property type="project" value="UniProtKB-KW"/>
</dbReference>
<dbReference type="GO" id="GO:0006424">
    <property type="term" value="P:glutamyl-tRNA aminoacylation"/>
    <property type="evidence" value="ECO:0007669"/>
    <property type="project" value="TreeGrafter"/>
</dbReference>
<dbReference type="Gene3D" id="3.40.50.620">
    <property type="entry name" value="HUPs"/>
    <property type="match status" value="1"/>
</dbReference>
<dbReference type="InterPro" id="IPR001412">
    <property type="entry name" value="aa-tRNA-synth_I_CS"/>
</dbReference>
<dbReference type="InterPro" id="IPR000924">
    <property type="entry name" value="Glu/Gln-tRNA-synth"/>
</dbReference>
<dbReference type="InterPro" id="IPR020058">
    <property type="entry name" value="Glu/Gln-tRNA-synth_Ib_cat-dom"/>
</dbReference>
<dbReference type="InterPro" id="IPR049940">
    <property type="entry name" value="GluQ/Sye"/>
</dbReference>
<dbReference type="InterPro" id="IPR014729">
    <property type="entry name" value="Rossmann-like_a/b/a_fold"/>
</dbReference>
<dbReference type="NCBIfam" id="NF004315">
    <property type="entry name" value="PRK05710.1-4"/>
    <property type="match status" value="1"/>
</dbReference>
<dbReference type="PANTHER" id="PTHR43311">
    <property type="entry name" value="GLUTAMATE--TRNA LIGASE"/>
    <property type="match status" value="1"/>
</dbReference>
<dbReference type="PANTHER" id="PTHR43311:SF1">
    <property type="entry name" value="GLUTAMYL-Q TRNA(ASP) SYNTHETASE"/>
    <property type="match status" value="1"/>
</dbReference>
<dbReference type="Pfam" id="PF00749">
    <property type="entry name" value="tRNA-synt_1c"/>
    <property type="match status" value="1"/>
</dbReference>
<dbReference type="PRINTS" id="PR00987">
    <property type="entry name" value="TRNASYNTHGLU"/>
</dbReference>
<dbReference type="SUPFAM" id="SSF52374">
    <property type="entry name" value="Nucleotidylyl transferase"/>
    <property type="match status" value="1"/>
</dbReference>
<dbReference type="PROSITE" id="PS00178">
    <property type="entry name" value="AA_TRNA_LIGASE_I"/>
    <property type="match status" value="1"/>
</dbReference>